<gene>
    <name evidence="1" type="primary">M</name>
</gene>
<keyword id="KW-0025">Alternative splicing</keyword>
<keyword id="KW-1015">Disulfide bond</keyword>
<keyword id="KW-1032">Host cell membrane</keyword>
<keyword id="KW-1043">Host membrane</keyword>
<keyword id="KW-0945">Host-virus interaction</keyword>
<keyword id="KW-0375">Hydrogen ion transport</keyword>
<keyword id="KW-1083">Inhibition of host autophagy by virus</keyword>
<keyword id="KW-0407">Ion channel</keyword>
<keyword id="KW-0406">Ion transport</keyword>
<keyword id="KW-0449">Lipoprotein</keyword>
<keyword id="KW-0472">Membrane</keyword>
<keyword id="KW-0564">Palmitate</keyword>
<keyword id="KW-0597">Phosphoprotein</keyword>
<keyword id="KW-0735">Signal-anchor</keyword>
<keyword id="KW-0812">Transmembrane</keyword>
<keyword id="KW-1133">Transmembrane helix</keyword>
<keyword id="KW-0813">Transport</keyword>
<keyword id="KW-1182">Viral ion channel</keyword>
<keyword id="KW-0946">Virion</keyword>
<proteinExistence type="inferred from homology"/>
<reference key="1">
    <citation type="journal article" date="2004" name="Proc. Natl. Acad. Sci. U.S.A.">
        <title>H5N1 influenza: a protean pandemic threat.</title>
        <authorList>
            <person name="Guan Y."/>
            <person name="Poon L.L.M."/>
            <person name="Cheung C.Y."/>
            <person name="Ellis T.M."/>
            <person name="Lim W."/>
            <person name="Lipatov A.S."/>
            <person name="Chan K.H."/>
            <person name="Sturm-Ramirez K.M."/>
            <person name="Cheung C.L."/>
            <person name="Leung Y.H.C."/>
            <person name="Yuen K.Y."/>
            <person name="Webster R.G."/>
            <person name="Peiris J.S.M."/>
        </authorList>
    </citation>
    <scope>NUCLEOTIDE SEQUENCE [GENOMIC RNA]</scope>
</reference>
<organismHost>
    <name type="scientific">Aves</name>
    <dbReference type="NCBI Taxonomy" id="8782"/>
</organismHost>
<organismHost>
    <name type="scientific">Felis catus</name>
    <name type="common">Cat</name>
    <name type="synonym">Felis silvestris catus</name>
    <dbReference type="NCBI Taxonomy" id="9685"/>
</organismHost>
<organismHost>
    <name type="scientific">Homo sapiens</name>
    <name type="common">Human</name>
    <dbReference type="NCBI Taxonomy" id="9606"/>
</organismHost>
<organismHost>
    <name type="scientific">Panthera pardus</name>
    <name type="common">Leopard</name>
    <name type="synonym">Felis pardus</name>
    <dbReference type="NCBI Taxonomy" id="9691"/>
</organismHost>
<organismHost>
    <name type="scientific">Panthera tigris</name>
    <name type="common">Tiger</name>
    <dbReference type="NCBI Taxonomy" id="9694"/>
</organismHost>
<organismHost>
    <name type="scientific">Sus scrofa</name>
    <name type="common">Pig</name>
    <dbReference type="NCBI Taxonomy" id="9823"/>
</organismHost>
<accession>P0C5T4</accession>
<comment type="function">
    <text evidence="1">Forms a proton-selective ion channel that is necessary for the efficient release of the viral genome during virus entry. After attaching to the cell surface, the virion enters the cell by endocytosis. Acidification of the endosome triggers M2 ion channel activity. The influx of protons into virion interior is believed to disrupt interactions between the viral ribonucleoprotein (RNP), matrix protein 1 (M1), and lipid bilayers, thereby freeing the viral genome from interaction with viral proteins and enabling RNA segments to migrate to the host cell nucleus, where influenza virus RNA transcription and replication occur. Also plays a role in viral proteins secretory pathway. Elevates the intravesicular pH of normally acidic compartments, such as trans-Golgi network, preventing newly formed hemagglutinin from premature switching to the fusion-active conformation.</text>
</comment>
<comment type="activity regulation">
    <text>The M2 protein from most influenza A strains is inhibited by amantadine and rimantadine, resulting in viral uncoating incapacity. Emergence of amantadine-resistant variants is usually rapid.</text>
</comment>
<comment type="subunit">
    <text evidence="1">Homotetramer; composed of two disulfide-linked dimers held together by non-covalent interactions. May interact with matrix protein 1.</text>
</comment>
<comment type="subcellular location">
    <subcellularLocation>
        <location evidence="1">Virion membrane</location>
    </subcellularLocation>
    <subcellularLocation>
        <location evidence="1">Host apical cell membrane</location>
        <topology evidence="1">Single-pass type III membrane protein</topology>
    </subcellularLocation>
    <text evidence="1">Abundantly expressed at the apical plasma membrane in infected polarized epithelial cells, in close proximity to budding and assembled virions. Minor component of virions (only 16-20 molecules/virion).</text>
</comment>
<comment type="alternative products">
    <event type="alternative splicing"/>
    <isoform>
        <id>P0C5T4-1</id>
        <name>M2</name>
        <sequence type="displayed"/>
    </isoform>
    <isoform>
        <id>Q6J8C3-1</id>
        <name>M1</name>
        <sequence type="external"/>
    </isoform>
    <text>Only the first 9 residues are shared by the 2 isoforms.</text>
</comment>
<comment type="domain">
    <text evidence="1">Cytoplasmic tail plays an important role in virion assembly and morphogenesis.</text>
</comment>
<comment type="miscellaneous">
    <text evidence="1">When the channel is activated, one or more imidazole moieties of His-37 probably become bi-protonated.</text>
</comment>
<comment type="similarity">
    <text evidence="1">Belongs to the influenza viruses matrix protein M2 family.</text>
</comment>
<evidence type="ECO:0000255" key="1">
    <source>
        <dbReference type="HAMAP-Rule" id="MF_04069"/>
    </source>
</evidence>
<evidence type="ECO:0000256" key="2">
    <source>
        <dbReference type="SAM" id="MobiDB-lite"/>
    </source>
</evidence>
<feature type="chain" id="PRO_0000311630" description="Matrix protein 2">
    <location>
        <begin position="1"/>
        <end position="97"/>
    </location>
</feature>
<feature type="topological domain" description="Virion surface" evidence="1">
    <location>
        <begin position="1"/>
        <end position="22"/>
    </location>
</feature>
<feature type="transmembrane region" description="Helical; Signal-anchor for type III membrane protein" evidence="1">
    <location>
        <begin position="23"/>
        <end position="43"/>
    </location>
</feature>
<feature type="topological domain" description="Intravirion" evidence="1">
    <location>
        <begin position="44"/>
        <end position="97"/>
    </location>
</feature>
<feature type="region of interest" description="Disordered" evidence="2">
    <location>
        <begin position="60"/>
        <end position="83"/>
    </location>
</feature>
<feature type="site" description="Essential for channel activity, possibly by being protonated during channel activation, and by forming the channel gate and the selective filter" evidence="1">
    <location>
        <position position="37"/>
    </location>
</feature>
<feature type="site" description="Seems to be involved in pH gating" evidence="1">
    <location>
        <position position="41"/>
    </location>
</feature>
<feature type="modified residue" description="Phosphoserine; by host" evidence="1">
    <location>
        <position position="64"/>
    </location>
</feature>
<feature type="modified residue" description="Phosphoserine; by host" evidence="1">
    <location>
        <position position="82"/>
    </location>
</feature>
<feature type="lipid moiety-binding region" description="S-palmitoyl cysteine; by host" evidence="1">
    <location>
        <position position="50"/>
    </location>
</feature>
<feature type="disulfide bond" description="Interchain (with C-17)" evidence="1">
    <location>
        <position position="17"/>
    </location>
</feature>
<feature type="disulfide bond" description="Interchain (with C-19)" evidence="1">
    <location>
        <position position="19"/>
    </location>
</feature>
<protein>
    <recommendedName>
        <fullName evidence="1">Matrix protein 2</fullName>
    </recommendedName>
    <alternativeName>
        <fullName evidence="1">Proton channel protein M2</fullName>
    </alternativeName>
</protein>
<organism>
    <name type="scientific">Influenza A virus (strain A/Chicken/Hong Kong/96.1/2002 H5N1 genotype Y)</name>
    <dbReference type="NCBI Taxonomy" id="279803"/>
    <lineage>
        <taxon>Viruses</taxon>
        <taxon>Riboviria</taxon>
        <taxon>Orthornavirae</taxon>
        <taxon>Negarnaviricota</taxon>
        <taxon>Polyploviricotina</taxon>
        <taxon>Insthoviricetes</taxon>
        <taxon>Articulavirales</taxon>
        <taxon>Orthomyxoviridae</taxon>
        <taxon>Alphainfluenzavirus</taxon>
        <taxon>Alphainfluenzavirus influenzae</taxon>
        <taxon>Influenza A virus</taxon>
    </lineage>
</organism>
<name>M2_I02A5</name>
<sequence length="97" mass="11212">MSLLTEVETPTRNEWECRCSGSSDPLVVAANIIGILHLILWILDRLFFKCIYRRLKYGLKRGPSTKGVPESMREEYRQEQQSAVDVDDGHFVNIELE</sequence>
<dbReference type="EMBL" id="AY575902">
    <property type="status" value="NOT_ANNOTATED_CDS"/>
    <property type="molecule type" value="Genomic_DNA"/>
</dbReference>
<dbReference type="BMRB" id="P0C5T4"/>
<dbReference type="SMR" id="P0C5T4"/>
<dbReference type="GO" id="GO:0020002">
    <property type="term" value="C:host cell plasma membrane"/>
    <property type="evidence" value="ECO:0007669"/>
    <property type="project" value="UniProtKB-SubCell"/>
</dbReference>
<dbReference type="GO" id="GO:0016020">
    <property type="term" value="C:membrane"/>
    <property type="evidence" value="ECO:0007669"/>
    <property type="project" value="UniProtKB-UniRule"/>
</dbReference>
<dbReference type="GO" id="GO:0055036">
    <property type="term" value="C:virion membrane"/>
    <property type="evidence" value="ECO:0007669"/>
    <property type="project" value="UniProtKB-SubCell"/>
</dbReference>
<dbReference type="GO" id="GO:0005216">
    <property type="term" value="F:monoatomic ion channel activity"/>
    <property type="evidence" value="ECO:0007669"/>
    <property type="project" value="UniProtKB-UniRule"/>
</dbReference>
<dbReference type="GO" id="GO:0015078">
    <property type="term" value="F:proton transmembrane transporter activity"/>
    <property type="evidence" value="ECO:0007669"/>
    <property type="project" value="UniProtKB-UniRule"/>
</dbReference>
<dbReference type="GO" id="GO:0051259">
    <property type="term" value="P:protein complex oligomerization"/>
    <property type="evidence" value="ECO:0007669"/>
    <property type="project" value="UniProtKB-UniRule"/>
</dbReference>
<dbReference type="GO" id="GO:0044694">
    <property type="term" value="P:symbiont genome entry into host cell via pore formation in plasma membrane"/>
    <property type="evidence" value="ECO:0007669"/>
    <property type="project" value="UniProtKB-UniRule"/>
</dbReference>
<dbReference type="GO" id="GO:0140321">
    <property type="term" value="P:symbiont-mediated suppression of host autophagy"/>
    <property type="evidence" value="ECO:0007669"/>
    <property type="project" value="UniProtKB-KW"/>
</dbReference>
<dbReference type="Gene3D" id="6.10.250.1640">
    <property type="match status" value="1"/>
</dbReference>
<dbReference type="HAMAP" id="MF_04069">
    <property type="entry name" value="INFV_M2"/>
    <property type="match status" value="1"/>
</dbReference>
<dbReference type="InterPro" id="IPR002089">
    <property type="entry name" value="Flu_M2"/>
</dbReference>
<dbReference type="Pfam" id="PF00599">
    <property type="entry name" value="Flu_M2"/>
    <property type="match status" value="1"/>
</dbReference>